<accession>A5N0Q4</accession>
<evidence type="ECO:0000255" key="1">
    <source>
        <dbReference type="HAMAP-Rule" id="MF_00137"/>
    </source>
</evidence>
<protein>
    <recommendedName>
        <fullName evidence="1">Phosphoribosylaminoimidazole-succinocarboxamide synthase</fullName>
        <ecNumber evidence="1">6.3.2.6</ecNumber>
    </recommendedName>
    <alternativeName>
        <fullName evidence="1">SAICAR synthetase</fullName>
    </alternativeName>
</protein>
<name>PUR7_CLOK5</name>
<reference key="1">
    <citation type="journal article" date="2008" name="Proc. Natl. Acad. Sci. U.S.A.">
        <title>The genome of Clostridium kluyveri, a strict anaerobe with unique metabolic features.</title>
        <authorList>
            <person name="Seedorf H."/>
            <person name="Fricke W.F."/>
            <person name="Veith B."/>
            <person name="Brueggemann H."/>
            <person name="Liesegang H."/>
            <person name="Strittmatter A."/>
            <person name="Miethke M."/>
            <person name="Buckel W."/>
            <person name="Hinderberger J."/>
            <person name="Li F."/>
            <person name="Hagemeier C."/>
            <person name="Thauer R.K."/>
            <person name="Gottschalk G."/>
        </authorList>
    </citation>
    <scope>NUCLEOTIDE SEQUENCE [LARGE SCALE GENOMIC DNA]</scope>
    <source>
        <strain>ATCC 8527 / DSM 555 / NBRC 12016 / NCIMB 10680 / K1</strain>
    </source>
</reference>
<keyword id="KW-0067">ATP-binding</keyword>
<keyword id="KW-0436">Ligase</keyword>
<keyword id="KW-0547">Nucleotide-binding</keyword>
<keyword id="KW-0658">Purine biosynthesis</keyword>
<keyword id="KW-1185">Reference proteome</keyword>
<sequence length="235" mass="27011">MKKGEMIYQGKAKKVYETDDKDKVIIYYKDDATAFNGEKKGQITDKGILNNNITSSLFELLEKNNIPTHFEKKLNDREQLCKKVDIIPLEVIVRNVAAGSMAKRLGLEEGTPLKTTVFELSYKDDSLGDPIINDYHAVAIGIATWDELKTIYDMTASINDILELFFRKLGIKLIDFKLEFGKFKDKIVLADEISPDTCRLWDAVTNEKLDKDRFRRDMGNVKEAYEEILRRISDN</sequence>
<feature type="chain" id="PRO_1000076450" description="Phosphoribosylaminoimidazole-succinocarboxamide synthase">
    <location>
        <begin position="1"/>
        <end position="235"/>
    </location>
</feature>
<comment type="catalytic activity">
    <reaction evidence="1">
        <text>5-amino-1-(5-phospho-D-ribosyl)imidazole-4-carboxylate + L-aspartate + ATP = (2S)-2-[5-amino-1-(5-phospho-beta-D-ribosyl)imidazole-4-carboxamido]succinate + ADP + phosphate + 2 H(+)</text>
        <dbReference type="Rhea" id="RHEA:22628"/>
        <dbReference type="ChEBI" id="CHEBI:15378"/>
        <dbReference type="ChEBI" id="CHEBI:29991"/>
        <dbReference type="ChEBI" id="CHEBI:30616"/>
        <dbReference type="ChEBI" id="CHEBI:43474"/>
        <dbReference type="ChEBI" id="CHEBI:58443"/>
        <dbReference type="ChEBI" id="CHEBI:77657"/>
        <dbReference type="ChEBI" id="CHEBI:456216"/>
        <dbReference type="EC" id="6.3.2.6"/>
    </reaction>
</comment>
<comment type="pathway">
    <text evidence="1">Purine metabolism; IMP biosynthesis via de novo pathway; 5-amino-1-(5-phospho-D-ribosyl)imidazole-4-carboxamide from 5-amino-1-(5-phospho-D-ribosyl)imidazole-4-carboxylate: step 1/2.</text>
</comment>
<comment type="similarity">
    <text evidence="1">Belongs to the SAICAR synthetase family.</text>
</comment>
<gene>
    <name evidence="1" type="primary">purC</name>
    <name type="ordered locus">CKL_2688</name>
</gene>
<organism>
    <name type="scientific">Clostridium kluyveri (strain ATCC 8527 / DSM 555 / NBRC 12016 / NCIMB 10680 / K1)</name>
    <dbReference type="NCBI Taxonomy" id="431943"/>
    <lineage>
        <taxon>Bacteria</taxon>
        <taxon>Bacillati</taxon>
        <taxon>Bacillota</taxon>
        <taxon>Clostridia</taxon>
        <taxon>Eubacteriales</taxon>
        <taxon>Clostridiaceae</taxon>
        <taxon>Clostridium</taxon>
    </lineage>
</organism>
<proteinExistence type="inferred from homology"/>
<dbReference type="EC" id="6.3.2.6" evidence="1"/>
<dbReference type="EMBL" id="CP000673">
    <property type="protein sequence ID" value="EDK34700.1"/>
    <property type="molecule type" value="Genomic_DNA"/>
</dbReference>
<dbReference type="RefSeq" id="WP_012103030.1">
    <property type="nucleotide sequence ID" value="NC_009706.1"/>
</dbReference>
<dbReference type="SMR" id="A5N0Q4"/>
<dbReference type="STRING" id="431943.CKL_2688"/>
<dbReference type="KEGG" id="ckl:CKL_2688"/>
<dbReference type="eggNOG" id="COG0152">
    <property type="taxonomic scope" value="Bacteria"/>
</dbReference>
<dbReference type="HOGENOM" id="CLU_061495_2_0_9"/>
<dbReference type="UniPathway" id="UPA00074">
    <property type="reaction ID" value="UER00131"/>
</dbReference>
<dbReference type="Proteomes" id="UP000002411">
    <property type="component" value="Chromosome"/>
</dbReference>
<dbReference type="GO" id="GO:0005524">
    <property type="term" value="F:ATP binding"/>
    <property type="evidence" value="ECO:0007669"/>
    <property type="project" value="UniProtKB-KW"/>
</dbReference>
<dbReference type="GO" id="GO:0004639">
    <property type="term" value="F:phosphoribosylaminoimidazolesuccinocarboxamide synthase activity"/>
    <property type="evidence" value="ECO:0007669"/>
    <property type="project" value="UniProtKB-UniRule"/>
</dbReference>
<dbReference type="GO" id="GO:0006189">
    <property type="term" value="P:'de novo' IMP biosynthetic process"/>
    <property type="evidence" value="ECO:0007669"/>
    <property type="project" value="UniProtKB-UniRule"/>
</dbReference>
<dbReference type="GO" id="GO:0009236">
    <property type="term" value="P:cobalamin biosynthetic process"/>
    <property type="evidence" value="ECO:0007669"/>
    <property type="project" value="InterPro"/>
</dbReference>
<dbReference type="CDD" id="cd01415">
    <property type="entry name" value="SAICAR_synt_PurC"/>
    <property type="match status" value="1"/>
</dbReference>
<dbReference type="FunFam" id="3.30.470.20:FF:000006">
    <property type="entry name" value="Phosphoribosylaminoimidazole-succinocarboxamide synthase"/>
    <property type="match status" value="1"/>
</dbReference>
<dbReference type="Gene3D" id="3.30.470.20">
    <property type="entry name" value="ATP-grasp fold, B domain"/>
    <property type="match status" value="1"/>
</dbReference>
<dbReference type="Gene3D" id="3.30.200.20">
    <property type="entry name" value="Phosphorylase Kinase, domain 1"/>
    <property type="match status" value="1"/>
</dbReference>
<dbReference type="HAMAP" id="MF_00137">
    <property type="entry name" value="SAICAR_synth"/>
    <property type="match status" value="1"/>
</dbReference>
<dbReference type="InterPro" id="IPR028923">
    <property type="entry name" value="SAICAR_synt/ADE2_N"/>
</dbReference>
<dbReference type="InterPro" id="IPR033934">
    <property type="entry name" value="SAICAR_synt_PurC"/>
</dbReference>
<dbReference type="InterPro" id="IPR001636">
    <property type="entry name" value="SAICAR_synth"/>
</dbReference>
<dbReference type="InterPro" id="IPR050089">
    <property type="entry name" value="SAICAR_synthetase"/>
</dbReference>
<dbReference type="InterPro" id="IPR018236">
    <property type="entry name" value="SAICAR_synthetase_CS"/>
</dbReference>
<dbReference type="NCBIfam" id="TIGR00081">
    <property type="entry name" value="purC"/>
    <property type="match status" value="1"/>
</dbReference>
<dbReference type="PANTHER" id="PTHR43599">
    <property type="entry name" value="MULTIFUNCTIONAL PROTEIN ADE2"/>
    <property type="match status" value="1"/>
</dbReference>
<dbReference type="PANTHER" id="PTHR43599:SF3">
    <property type="entry name" value="SI:DKEY-6E2.2"/>
    <property type="match status" value="1"/>
</dbReference>
<dbReference type="Pfam" id="PF01259">
    <property type="entry name" value="SAICAR_synt"/>
    <property type="match status" value="1"/>
</dbReference>
<dbReference type="SUPFAM" id="SSF56104">
    <property type="entry name" value="SAICAR synthase-like"/>
    <property type="match status" value="1"/>
</dbReference>
<dbReference type="PROSITE" id="PS01057">
    <property type="entry name" value="SAICAR_SYNTHETASE_1"/>
    <property type="match status" value="1"/>
</dbReference>
<dbReference type="PROSITE" id="PS01058">
    <property type="entry name" value="SAICAR_SYNTHETASE_2"/>
    <property type="match status" value="1"/>
</dbReference>